<organism>
    <name type="scientific">Trichormus variabilis (strain ATCC 29413 / PCC 7937)</name>
    <name type="common">Anabaena variabilis</name>
    <dbReference type="NCBI Taxonomy" id="240292"/>
    <lineage>
        <taxon>Bacteria</taxon>
        <taxon>Bacillati</taxon>
        <taxon>Cyanobacteriota</taxon>
        <taxon>Cyanophyceae</taxon>
        <taxon>Nostocales</taxon>
        <taxon>Nostocaceae</taxon>
        <taxon>Trichormus</taxon>
    </lineage>
</organism>
<sequence>MVHVRYGGQNGEQYELAISENHIVVRTESRSSLISDRPFEAAPVSPQARNILNQFELSTRFSQAGVEVLHVKEPSHDGALRDTAREILNQEPEVQFAGRVLIDPVSQQPIVYTENLFVKFDHEEDVSFCQEILGRYGLTIKRQLEYARNAYFVSAPSNTGLAIFDISERLLNEESVELCHPELVREFRQRQAFPPQWHLKQTTIGGKTINAHANVEAAWKLSDGTGTIIAIIDDGVDIDHEEFRSSGKIVAPRDVTRKTNFPTPGNRDNHGTACAGVACGNGNFGASGVAPGAKLMPIRFVSALGSQDEADSFVWAAQNGADVISCSWGPPDGTWWDDKDPLHKQKVPLPDSTRLAMDYAINKGRNGKGCVILFAAGNGNESVDNDGYASYEKVIAVAACNDFGTRSAYSDFGTAVWCAFPSNNGNPSQTPGIWTADRTGVVGYNSGNTNLGDQAGNYTNSFGGTSSACPGAAGVAALILSRNPNLRWDEVRDIIKRSCDRIDPVGGNYNAEGRSPFYGYGRINALKAVELALPAQPEPVSIFTAVQDVPINDLQISQLSLAIANTNPIKSIKVTVDIEHTYIGDLVVSLNPPAESGVLPIILHDRKGGGADDIKQTYDEVSTPGLTALKGKIPQGTWTLEVADKAQADTGKIRSLTIELGF</sequence>
<reference key="1">
    <citation type="journal article" date="2014" name="Stand. Genomic Sci.">
        <title>Complete genome sequence of Anabaena variabilis ATCC 29413.</title>
        <authorList>
            <person name="Thiel T."/>
            <person name="Pratte B.S."/>
            <person name="Zhong J."/>
            <person name="Goodwin L."/>
            <person name="Copeland A."/>
            <person name="Lucas S."/>
            <person name="Han C."/>
            <person name="Pitluck S."/>
            <person name="Land M.L."/>
            <person name="Kyrpides N.C."/>
            <person name="Woyke T."/>
        </authorList>
    </citation>
    <scope>NUCLEOTIDE SEQUENCE [LARGE SCALE GENOMIC DNA]</scope>
    <source>
        <strain>ATCC 29413 / PCC 7937</strain>
    </source>
</reference>
<reference key="2">
    <citation type="journal article" date="1991" name="Mol. Gen. Genet.">
        <title>Calcium-dependent protease of the cyanobacterium Anabaena: molecular cloning and expression of the gene in Escherichia coli, sequencing and site-directed mutagenesis.</title>
        <authorList>
            <person name="Maldener I."/>
            <person name="Lockau W."/>
            <person name="Cai Y."/>
            <person name="Wolk C.P."/>
        </authorList>
    </citation>
    <scope>NUCLEOTIDE SEQUENCE [GENOMIC DNA] OF 1-648</scope>
    <scope>PROTEIN SEQUENCE OF 192-205 AND 258-262</scope>
</reference>
<reference key="3">
    <citation type="journal article" date="1996" name="Eur. J. Biochem.">
        <title>Evidence for propeptide-assisted folding of the calcium-dependent protease of the cyanobacterium Anabaena.</title>
        <authorList>
            <person name="Baier K."/>
            <person name="Nicklisch S."/>
            <person name="Maldener I."/>
            <person name="Lockau W."/>
        </authorList>
    </citation>
    <scope>SEQUENCE REVISION</scope>
    <scope>SUBCELLULAR LOCATION</scope>
</reference>
<reference key="4">
    <citation type="journal article" date="1997" name="Eur. J. Biochem.">
        <authorList>
            <person name="Baier K."/>
            <person name="Nicklisch S."/>
            <person name="Maldener I."/>
            <person name="Lockau W."/>
        </authorList>
    </citation>
    <scope>ERRATUM OF PUBMED:8944762</scope>
</reference>
<name>PRCA_TRIV2</name>
<accession>P23916</accession>
<accession>Q3M5X2</accession>
<gene>
    <name type="primary">prcA</name>
    <name type="ordered locus">Ava_4009</name>
</gene>
<proteinExistence type="evidence at protein level"/>
<feature type="propeptide" id="PRO_0000027132">
    <location>
        <begin position="1"/>
        <end status="unknown"/>
    </location>
</feature>
<feature type="chain" id="PRO_0000027133" description="Calcium-dependent protease">
    <location>
        <begin status="unknown"/>
        <end position="662"/>
    </location>
</feature>
<feature type="domain" description="Peptidase S8" evidence="2">
    <location>
        <begin position="196"/>
        <end position="529"/>
    </location>
</feature>
<feature type="domain" description="P/Homo B" evidence="1">
    <location>
        <begin position="535"/>
        <end position="662"/>
    </location>
</feature>
<feature type="active site" description="Charge relay system" evidence="2">
    <location>
        <position position="233"/>
    </location>
</feature>
<feature type="active site" description="Charge relay system" evidence="2">
    <location>
        <position position="270"/>
    </location>
</feature>
<feature type="active site" description="Charge relay system" evidence="2">
    <location>
        <position position="466"/>
    </location>
</feature>
<feature type="sequence conflict" description="In Ref. 2; AA sequence." evidence="4" ref="2">
    <location>
        <position position="610"/>
    </location>
</feature>
<evidence type="ECO:0000255" key="1">
    <source>
        <dbReference type="PROSITE-ProRule" id="PRU01173"/>
    </source>
</evidence>
<evidence type="ECO:0000255" key="2">
    <source>
        <dbReference type="PROSITE-ProRule" id="PRU01240"/>
    </source>
</evidence>
<evidence type="ECO:0000269" key="3">
    <source>
    </source>
</evidence>
<evidence type="ECO:0000305" key="4"/>
<comment type="function">
    <text>Degrades phycobiliproteins in vitro. Has a substrate specificity similar to that of trypsin.</text>
</comment>
<comment type="subcellular location">
    <subcellularLocation>
        <location evidence="3">Cytoplasm</location>
    </subcellularLocation>
</comment>
<comment type="similarity">
    <text evidence="4">Belongs to the peptidase S8 family.</text>
</comment>
<comment type="sequence caution" evidence="4">
    <conflict type="frameshift">
        <sequence resource="EMBL-CDS" id="CAA40274"/>
    </conflict>
</comment>
<keyword id="KW-0106">Calcium</keyword>
<keyword id="KW-0963">Cytoplasm</keyword>
<keyword id="KW-0903">Direct protein sequencing</keyword>
<keyword id="KW-0378">Hydrolase</keyword>
<keyword id="KW-0645">Protease</keyword>
<keyword id="KW-0720">Serine protease</keyword>
<keyword id="KW-0865">Zymogen</keyword>
<dbReference type="EC" id="3.4.21.-"/>
<dbReference type="EMBL" id="CP000117">
    <property type="protein sequence ID" value="ABA23614.1"/>
    <property type="molecule type" value="Genomic_DNA"/>
</dbReference>
<dbReference type="EMBL" id="X56955">
    <property type="protein sequence ID" value="CAA40274.1"/>
    <property type="status" value="ALT_FRAME"/>
    <property type="molecule type" value="Genomic_DNA"/>
</dbReference>
<dbReference type="PIR" id="S13335">
    <property type="entry name" value="PRAISB"/>
</dbReference>
<dbReference type="SMR" id="P23916"/>
<dbReference type="STRING" id="240292.Ava_4009"/>
<dbReference type="MEROPS" id="S08.079"/>
<dbReference type="KEGG" id="ava:Ava_4009"/>
<dbReference type="eggNOG" id="COG1404">
    <property type="taxonomic scope" value="Bacteria"/>
</dbReference>
<dbReference type="eggNOG" id="COG4935">
    <property type="taxonomic scope" value="Bacteria"/>
</dbReference>
<dbReference type="HOGENOM" id="CLU_011263_10_1_3"/>
<dbReference type="Proteomes" id="UP000002533">
    <property type="component" value="Chromosome"/>
</dbReference>
<dbReference type="GO" id="GO:0005737">
    <property type="term" value="C:cytoplasm"/>
    <property type="evidence" value="ECO:0007669"/>
    <property type="project" value="UniProtKB-SubCell"/>
</dbReference>
<dbReference type="GO" id="GO:0012505">
    <property type="term" value="C:endomembrane system"/>
    <property type="evidence" value="ECO:0007669"/>
    <property type="project" value="UniProtKB-ARBA"/>
</dbReference>
<dbReference type="GO" id="GO:0043231">
    <property type="term" value="C:intracellular membrane-bounded organelle"/>
    <property type="evidence" value="ECO:0007669"/>
    <property type="project" value="UniProtKB-ARBA"/>
</dbReference>
<dbReference type="GO" id="GO:0016020">
    <property type="term" value="C:membrane"/>
    <property type="evidence" value="ECO:0007669"/>
    <property type="project" value="TreeGrafter"/>
</dbReference>
<dbReference type="GO" id="GO:0004252">
    <property type="term" value="F:serine-type endopeptidase activity"/>
    <property type="evidence" value="ECO:0007669"/>
    <property type="project" value="InterPro"/>
</dbReference>
<dbReference type="GO" id="GO:0016485">
    <property type="term" value="P:protein processing"/>
    <property type="evidence" value="ECO:0007669"/>
    <property type="project" value="TreeGrafter"/>
</dbReference>
<dbReference type="CDD" id="cd07498">
    <property type="entry name" value="Peptidases_S8_15"/>
    <property type="match status" value="1"/>
</dbReference>
<dbReference type="Gene3D" id="2.60.120.260">
    <property type="entry name" value="Galactose-binding domain-like"/>
    <property type="match status" value="1"/>
</dbReference>
<dbReference type="Gene3D" id="3.40.50.200">
    <property type="entry name" value="Peptidase S8/S53 domain"/>
    <property type="match status" value="1"/>
</dbReference>
<dbReference type="InterPro" id="IPR008979">
    <property type="entry name" value="Galactose-bd-like_sf"/>
</dbReference>
<dbReference type="InterPro" id="IPR002884">
    <property type="entry name" value="P_dom"/>
</dbReference>
<dbReference type="InterPro" id="IPR034054">
    <property type="entry name" value="Pep_S8_PrcA"/>
</dbReference>
<dbReference type="InterPro" id="IPR000209">
    <property type="entry name" value="Peptidase_S8/S53_dom"/>
</dbReference>
<dbReference type="InterPro" id="IPR036852">
    <property type="entry name" value="Peptidase_S8/S53_dom_sf"/>
</dbReference>
<dbReference type="InterPro" id="IPR023827">
    <property type="entry name" value="Peptidase_S8_Asp-AS"/>
</dbReference>
<dbReference type="InterPro" id="IPR022398">
    <property type="entry name" value="Peptidase_S8_His-AS"/>
</dbReference>
<dbReference type="InterPro" id="IPR023828">
    <property type="entry name" value="Peptidase_S8_Ser-AS"/>
</dbReference>
<dbReference type="InterPro" id="IPR015500">
    <property type="entry name" value="Peptidase_S8_subtilisin-rel"/>
</dbReference>
<dbReference type="PANTHER" id="PTHR42884:SF14">
    <property type="entry name" value="NEUROENDOCRINE CONVERTASE 1"/>
    <property type="match status" value="1"/>
</dbReference>
<dbReference type="PANTHER" id="PTHR42884">
    <property type="entry name" value="PROPROTEIN CONVERTASE SUBTILISIN/KEXIN-RELATED"/>
    <property type="match status" value="1"/>
</dbReference>
<dbReference type="Pfam" id="PF01483">
    <property type="entry name" value="P_proprotein"/>
    <property type="match status" value="1"/>
</dbReference>
<dbReference type="Pfam" id="PF00082">
    <property type="entry name" value="Peptidase_S8"/>
    <property type="match status" value="1"/>
</dbReference>
<dbReference type="PRINTS" id="PR00723">
    <property type="entry name" value="SUBTILISIN"/>
</dbReference>
<dbReference type="SUPFAM" id="SSF49785">
    <property type="entry name" value="Galactose-binding domain-like"/>
    <property type="match status" value="1"/>
</dbReference>
<dbReference type="SUPFAM" id="SSF52743">
    <property type="entry name" value="Subtilisin-like"/>
    <property type="match status" value="1"/>
</dbReference>
<dbReference type="PROSITE" id="PS51829">
    <property type="entry name" value="P_HOMO_B"/>
    <property type="match status" value="1"/>
</dbReference>
<dbReference type="PROSITE" id="PS51892">
    <property type="entry name" value="SUBTILASE"/>
    <property type="match status" value="1"/>
</dbReference>
<dbReference type="PROSITE" id="PS00136">
    <property type="entry name" value="SUBTILASE_ASP"/>
    <property type="match status" value="1"/>
</dbReference>
<dbReference type="PROSITE" id="PS00137">
    <property type="entry name" value="SUBTILASE_HIS"/>
    <property type="match status" value="1"/>
</dbReference>
<dbReference type="PROSITE" id="PS00138">
    <property type="entry name" value="SUBTILASE_SER"/>
    <property type="match status" value="1"/>
</dbReference>
<protein>
    <recommendedName>
        <fullName>Calcium-dependent protease</fullName>
        <ecNumber>3.4.21.-</ecNumber>
    </recommendedName>
    <alternativeName>
        <fullName>Trypsin</fullName>
    </alternativeName>
</protein>